<feature type="chain" id="PRO_0000368579" description="ATP synthase subunit b">
    <location>
        <begin position="1"/>
        <end position="177"/>
    </location>
</feature>
<feature type="transmembrane region" description="Helical" evidence="1">
    <location>
        <begin position="19"/>
        <end position="39"/>
    </location>
</feature>
<evidence type="ECO:0000255" key="1">
    <source>
        <dbReference type="HAMAP-Rule" id="MF_01398"/>
    </source>
</evidence>
<gene>
    <name evidence="1" type="primary">atpF</name>
    <name type="ordered locus">Mfl111</name>
</gene>
<name>ATPF_MESFL</name>
<comment type="function">
    <text evidence="1">F(1)F(0) ATP synthase produces ATP from ADP in the presence of a proton or sodium gradient. F-type ATPases consist of two structural domains, F(1) containing the extramembraneous catalytic core and F(0) containing the membrane proton channel, linked together by a central stalk and a peripheral stalk. During catalysis, ATP synthesis in the catalytic domain of F(1) is coupled via a rotary mechanism of the central stalk subunits to proton translocation.</text>
</comment>
<comment type="function">
    <text evidence="1">Component of the F(0) channel, it forms part of the peripheral stalk, linking F(1) to F(0).</text>
</comment>
<comment type="subunit">
    <text evidence="1">F-type ATPases have 2 components, F(1) - the catalytic core - and F(0) - the membrane proton channel. F(1) has five subunits: alpha(3), beta(3), gamma(1), delta(1), epsilon(1). F(0) has three main subunits: a(1), b(2) and c(10-14). The alpha and beta chains form an alternating ring which encloses part of the gamma chain. F(1) is attached to F(0) by a central stalk formed by the gamma and epsilon chains, while a peripheral stalk is formed by the delta and b chains.</text>
</comment>
<comment type="subcellular location">
    <subcellularLocation>
        <location evidence="1">Cell membrane</location>
        <topology evidence="1">Single-pass membrane protein</topology>
    </subcellularLocation>
</comment>
<comment type="similarity">
    <text evidence="1">Belongs to the ATPase B chain family.</text>
</comment>
<accession>Q6F206</accession>
<organism>
    <name type="scientific">Mesoplasma florum (strain ATCC 33453 / NBRC 100688 / NCTC 11704 / L1)</name>
    <name type="common">Acholeplasma florum</name>
    <dbReference type="NCBI Taxonomy" id="265311"/>
    <lineage>
        <taxon>Bacteria</taxon>
        <taxon>Bacillati</taxon>
        <taxon>Mycoplasmatota</taxon>
        <taxon>Mollicutes</taxon>
        <taxon>Entomoplasmatales</taxon>
        <taxon>Entomoplasmataceae</taxon>
        <taxon>Mesoplasma</taxon>
    </lineage>
</organism>
<dbReference type="EMBL" id="AE017263">
    <property type="protein sequence ID" value="AAT75467.1"/>
    <property type="molecule type" value="Genomic_DNA"/>
</dbReference>
<dbReference type="RefSeq" id="WP_011183008.1">
    <property type="nucleotide sequence ID" value="NC_006055.1"/>
</dbReference>
<dbReference type="RefSeq" id="YP_053351.1">
    <property type="nucleotide sequence ID" value="NC_006055.1"/>
</dbReference>
<dbReference type="SMR" id="Q6F206"/>
<dbReference type="STRING" id="265311.Mfl111"/>
<dbReference type="PaxDb" id="265311-Mfl111"/>
<dbReference type="EnsemblBacteria" id="AAT75467">
    <property type="protein sequence ID" value="AAT75467"/>
    <property type="gene ID" value="Mfl111"/>
</dbReference>
<dbReference type="GeneID" id="2897675"/>
<dbReference type="KEGG" id="mfl:Mfl111"/>
<dbReference type="PATRIC" id="fig|265311.5.peg.112"/>
<dbReference type="eggNOG" id="COG0711">
    <property type="taxonomic scope" value="Bacteria"/>
</dbReference>
<dbReference type="HOGENOM" id="CLU_079215_4_3_14"/>
<dbReference type="OrthoDB" id="399036at2"/>
<dbReference type="Proteomes" id="UP000006647">
    <property type="component" value="Chromosome"/>
</dbReference>
<dbReference type="GO" id="GO:0005886">
    <property type="term" value="C:plasma membrane"/>
    <property type="evidence" value="ECO:0007669"/>
    <property type="project" value="UniProtKB-SubCell"/>
</dbReference>
<dbReference type="GO" id="GO:0045259">
    <property type="term" value="C:proton-transporting ATP synthase complex"/>
    <property type="evidence" value="ECO:0007669"/>
    <property type="project" value="UniProtKB-KW"/>
</dbReference>
<dbReference type="GO" id="GO:0046933">
    <property type="term" value="F:proton-transporting ATP synthase activity, rotational mechanism"/>
    <property type="evidence" value="ECO:0007669"/>
    <property type="project" value="UniProtKB-UniRule"/>
</dbReference>
<dbReference type="GO" id="GO:0046961">
    <property type="term" value="F:proton-transporting ATPase activity, rotational mechanism"/>
    <property type="evidence" value="ECO:0007669"/>
    <property type="project" value="TreeGrafter"/>
</dbReference>
<dbReference type="CDD" id="cd06503">
    <property type="entry name" value="ATP-synt_Fo_b"/>
    <property type="match status" value="1"/>
</dbReference>
<dbReference type="HAMAP" id="MF_01398">
    <property type="entry name" value="ATP_synth_b_bprime"/>
    <property type="match status" value="1"/>
</dbReference>
<dbReference type="InterPro" id="IPR002146">
    <property type="entry name" value="ATP_synth_b/b'su_bac/chlpt"/>
</dbReference>
<dbReference type="InterPro" id="IPR005864">
    <property type="entry name" value="ATP_synth_F0_bsu_bac"/>
</dbReference>
<dbReference type="InterPro" id="IPR050059">
    <property type="entry name" value="ATP_synthase_B_chain"/>
</dbReference>
<dbReference type="NCBIfam" id="TIGR01144">
    <property type="entry name" value="ATP_synt_b"/>
    <property type="match status" value="1"/>
</dbReference>
<dbReference type="PANTHER" id="PTHR33445">
    <property type="entry name" value="ATP SYNTHASE SUBUNIT B', CHLOROPLASTIC"/>
    <property type="match status" value="1"/>
</dbReference>
<dbReference type="PANTHER" id="PTHR33445:SF2">
    <property type="entry name" value="ATP SYNTHASE SUBUNIT B', CHLOROPLASTIC"/>
    <property type="match status" value="1"/>
</dbReference>
<dbReference type="Pfam" id="PF00430">
    <property type="entry name" value="ATP-synt_B"/>
    <property type="match status" value="1"/>
</dbReference>
<protein>
    <recommendedName>
        <fullName evidence="1">ATP synthase subunit b</fullName>
    </recommendedName>
    <alternativeName>
        <fullName evidence="1">ATP synthase F(0) sector subunit b</fullName>
    </alternativeName>
    <alternativeName>
        <fullName evidence="1">ATPase subunit I</fullName>
    </alternativeName>
    <alternativeName>
        <fullName evidence="1">F-type ATPase subunit b</fullName>
        <shortName evidence="1">F-ATPase subunit b</shortName>
    </alternativeName>
</protein>
<sequence>MIFFAETQTAGVPEIITSLFPNLPNFIAHVIATIVLVVILSKLMYKPFRKTIKDRRNKINELLSEAVQKQTEANIGVRKAEALLQDAKTESSLIIQTSKVDADIQKTHIISEAHKYADIIKNQAEKDIAQERSKIEAEIKTTIVNVAFDAAEQILQTEINKTKNKKIVDEFIENLDK</sequence>
<proteinExistence type="inferred from homology"/>
<reference key="1">
    <citation type="submission" date="2004-06" db="EMBL/GenBank/DDBJ databases">
        <authorList>
            <person name="Birren B.W."/>
            <person name="Stange-Thomann N."/>
            <person name="Hafez N."/>
            <person name="DeCaprio D."/>
            <person name="Fisher S."/>
            <person name="Butler J."/>
            <person name="Elkins T."/>
            <person name="Kodira C.D."/>
            <person name="Major J."/>
            <person name="Wang S."/>
            <person name="Nicol R."/>
            <person name="Nusbaum C."/>
        </authorList>
    </citation>
    <scope>NUCLEOTIDE SEQUENCE [LARGE SCALE GENOMIC DNA]</scope>
    <source>
        <strain>ATCC 33453 / NBRC 100688 / NCTC 11704 / L1</strain>
    </source>
</reference>
<keyword id="KW-0066">ATP synthesis</keyword>
<keyword id="KW-1003">Cell membrane</keyword>
<keyword id="KW-0138">CF(0)</keyword>
<keyword id="KW-0375">Hydrogen ion transport</keyword>
<keyword id="KW-0406">Ion transport</keyword>
<keyword id="KW-0472">Membrane</keyword>
<keyword id="KW-1185">Reference proteome</keyword>
<keyword id="KW-0812">Transmembrane</keyword>
<keyword id="KW-1133">Transmembrane helix</keyword>
<keyword id="KW-0813">Transport</keyword>